<evidence type="ECO:0000255" key="1"/>
<evidence type="ECO:0000255" key="2">
    <source>
        <dbReference type="PROSITE-ProRule" id="PRU00122"/>
    </source>
</evidence>
<evidence type="ECO:0000256" key="3">
    <source>
        <dbReference type="SAM" id="MobiDB-lite"/>
    </source>
</evidence>
<evidence type="ECO:0000269" key="4">
    <source>
    </source>
</evidence>
<evidence type="ECO:0000305" key="5"/>
<feature type="signal peptide" evidence="1">
    <location>
        <begin position="1"/>
        <end position="38"/>
    </location>
</feature>
<feature type="chain" id="PRO_0000412538" description="Neurexin-1a-beta">
    <location>
        <begin position="39"/>
        <end position="449"/>
    </location>
</feature>
<feature type="topological domain" description="Extracellular" evidence="1">
    <location>
        <begin position="39"/>
        <end position="373"/>
    </location>
</feature>
<feature type="transmembrane region" description="Helical" evidence="1">
    <location>
        <begin position="374"/>
        <end position="394"/>
    </location>
</feature>
<feature type="topological domain" description="Cytoplasmic" evidence="1">
    <location>
        <begin position="395"/>
        <end position="449"/>
    </location>
</feature>
<feature type="domain" description="Laminin G-like" evidence="2">
    <location>
        <begin position="71"/>
        <end position="272"/>
    </location>
</feature>
<feature type="region of interest" description="Disordered" evidence="3">
    <location>
        <begin position="276"/>
        <end position="366"/>
    </location>
</feature>
<feature type="region of interest" description="Disordered" evidence="3">
    <location>
        <begin position="415"/>
        <end position="449"/>
    </location>
</feature>
<feature type="compositionally biased region" description="Low complexity" evidence="3">
    <location>
        <begin position="280"/>
        <end position="311"/>
    </location>
</feature>
<feature type="compositionally biased region" description="Polar residues" evidence="3">
    <location>
        <begin position="312"/>
        <end position="322"/>
    </location>
</feature>
<protein>
    <recommendedName>
        <fullName>Neurexin-1a-beta</fullName>
    </recommendedName>
    <alternativeName>
        <fullName>Neurexin Ia-beta</fullName>
    </alternativeName>
</protein>
<dbReference type="EMBL" id="DQ641425">
    <property type="protein sequence ID" value="ABG25162.1"/>
    <property type="molecule type" value="mRNA"/>
</dbReference>
<dbReference type="EMBL" id="AB214179">
    <property type="protein sequence ID" value="BAG81979.1"/>
    <property type="molecule type" value="mRNA"/>
</dbReference>
<dbReference type="RefSeq" id="NP_001333852.1">
    <molecule id="A1XQX1-1"/>
    <property type="nucleotide sequence ID" value="NM_001346923.1"/>
</dbReference>
<dbReference type="SMR" id="A1XQX1"/>
<dbReference type="STRING" id="7955.ENSDARP00000082592"/>
<dbReference type="Ensembl" id="ENSDART00000088159">
    <molecule id="A1XQX1-1"/>
    <property type="protein sequence ID" value="ENSDARP00000082592"/>
    <property type="gene ID" value="ENSDARG00000061647"/>
</dbReference>
<dbReference type="GeneID" id="565531"/>
<dbReference type="AGR" id="ZFIN:ZDB-GENE-070206-1"/>
<dbReference type="CTD" id="565531"/>
<dbReference type="ZFIN" id="ZDB-GENE-070206-1">
    <property type="gene designation" value="nrxn1a"/>
</dbReference>
<dbReference type="HOGENOM" id="CLU_025785_1_0_1"/>
<dbReference type="OrthoDB" id="5989513at2759"/>
<dbReference type="Proteomes" id="UP000000437">
    <property type="component" value="Alternate scaffold 12"/>
</dbReference>
<dbReference type="Proteomes" id="UP000000437">
    <property type="component" value="Chromosome 12"/>
</dbReference>
<dbReference type="Bgee" id="ENSDARG00000061647">
    <property type="expression patterns" value="Expressed in brain and 7 other cell types or tissues"/>
</dbReference>
<dbReference type="ExpressionAtlas" id="A1XQX1">
    <property type="expression patterns" value="baseline and differential"/>
</dbReference>
<dbReference type="GO" id="GO:0016020">
    <property type="term" value="C:membrane"/>
    <property type="evidence" value="ECO:0007669"/>
    <property type="project" value="UniProtKB-SubCell"/>
</dbReference>
<dbReference type="GO" id="GO:0007155">
    <property type="term" value="P:cell adhesion"/>
    <property type="evidence" value="ECO:0007669"/>
    <property type="project" value="UniProtKB-KW"/>
</dbReference>
<dbReference type="GO" id="GO:0002040">
    <property type="term" value="P:sprouting angiogenesis"/>
    <property type="evidence" value="ECO:0000315"/>
    <property type="project" value="ZFIN"/>
</dbReference>
<dbReference type="CDD" id="cd00110">
    <property type="entry name" value="LamG"/>
    <property type="match status" value="1"/>
</dbReference>
<dbReference type="FunFam" id="2.60.120.200:FF:000003">
    <property type="entry name" value="neurexin-1 isoform X1"/>
    <property type="match status" value="1"/>
</dbReference>
<dbReference type="Gene3D" id="2.60.120.200">
    <property type="match status" value="1"/>
</dbReference>
<dbReference type="InterPro" id="IPR013320">
    <property type="entry name" value="ConA-like_dom_sf"/>
</dbReference>
<dbReference type="InterPro" id="IPR001791">
    <property type="entry name" value="Laminin_G"/>
</dbReference>
<dbReference type="InterPro" id="IPR003585">
    <property type="entry name" value="Neurexin-like"/>
</dbReference>
<dbReference type="InterPro" id="IPR050372">
    <property type="entry name" value="Neurexin-related_CASP"/>
</dbReference>
<dbReference type="InterPro" id="IPR027789">
    <property type="entry name" value="Syndecan/Neurexin_dom"/>
</dbReference>
<dbReference type="PANTHER" id="PTHR15036:SF51">
    <property type="entry name" value="NEUREXIN-1"/>
    <property type="match status" value="1"/>
</dbReference>
<dbReference type="PANTHER" id="PTHR15036">
    <property type="entry name" value="PIKACHURIN-LIKE PROTEIN"/>
    <property type="match status" value="1"/>
</dbReference>
<dbReference type="Pfam" id="PF02210">
    <property type="entry name" value="Laminin_G_2"/>
    <property type="match status" value="1"/>
</dbReference>
<dbReference type="Pfam" id="PF01034">
    <property type="entry name" value="Syndecan"/>
    <property type="match status" value="1"/>
</dbReference>
<dbReference type="SMART" id="SM00294">
    <property type="entry name" value="4.1m"/>
    <property type="match status" value="1"/>
</dbReference>
<dbReference type="SMART" id="SM00282">
    <property type="entry name" value="LamG"/>
    <property type="match status" value="1"/>
</dbReference>
<dbReference type="SUPFAM" id="SSF49899">
    <property type="entry name" value="Concanavalin A-like lectins/glucanases"/>
    <property type="match status" value="1"/>
</dbReference>
<dbReference type="PROSITE" id="PS50025">
    <property type="entry name" value="LAM_G_DOMAIN"/>
    <property type="match status" value="1"/>
</dbReference>
<reference key="1">
    <citation type="journal article" date="2007" name="Mol. Biol. Evol.">
        <title>Comparative genome analysis of the neurexin gene family in Danio rerio: insights into their functions and evolution.</title>
        <authorList>
            <person name="Rissone A."/>
            <person name="Monopoli M."/>
            <person name="Beltrame M."/>
            <person name="Bussolino F."/>
            <person name="Cotelli F."/>
            <person name="Arese M."/>
        </authorList>
    </citation>
    <scope>NUCLEOTIDE SEQUENCE [MRNA]</scope>
    <scope>DEVELOPMENTAL STAGE</scope>
    <scope>ALTERNATIVE SPLICING</scope>
</reference>
<reference key="2">
    <citation type="submission" date="2005-05" db="EMBL/GenBank/DDBJ databases">
        <title>Regulation by beta-neurexin of synaptic vesicle accumulation in axon terminals of zebrafish olfactory sensory neurons.</title>
        <authorList>
            <person name="Masuda Y."/>
            <person name="Yoshida T."/>
            <person name="Mishina M."/>
        </authorList>
    </citation>
    <scope>NUCLEOTIDE SEQUENCE [MRNA]</scope>
</reference>
<organism>
    <name type="scientific">Danio rerio</name>
    <name type="common">Zebrafish</name>
    <name type="synonym">Brachydanio rerio</name>
    <dbReference type="NCBI Taxonomy" id="7955"/>
    <lineage>
        <taxon>Eukaryota</taxon>
        <taxon>Metazoa</taxon>
        <taxon>Chordata</taxon>
        <taxon>Craniata</taxon>
        <taxon>Vertebrata</taxon>
        <taxon>Euteleostomi</taxon>
        <taxon>Actinopterygii</taxon>
        <taxon>Neopterygii</taxon>
        <taxon>Teleostei</taxon>
        <taxon>Ostariophysi</taxon>
        <taxon>Cypriniformes</taxon>
        <taxon>Danionidae</taxon>
        <taxon>Danioninae</taxon>
        <taxon>Danio</taxon>
    </lineage>
</organism>
<name>NR1AB_DANRE</name>
<gene>
    <name type="primary">nrxn1a</name>
</gene>
<accession>A1XQX1</accession>
<proteinExistence type="evidence at transcript level"/>
<comment type="function">
    <text>Neuronal cell surface protein that may be involved in cell recognition and cell adhesion. May play a role in formation or maintenance of synaptic junctions.</text>
</comment>
<comment type="subcellular location">
    <subcellularLocation>
        <location evidence="5">Membrane</location>
        <topology evidence="5">Single-pass type I membrane protein</topology>
    </subcellularLocation>
</comment>
<comment type="alternative products">
    <event type="alternative promoter"/>
    <event type="alternative splicing"/>
    <isoform>
        <id>A1XQX1-1</id>
        <name>Beta</name>
        <sequence type="displayed"/>
    </isoform>
    <isoform>
        <id>A1XQX0-1</id>
        <name>Alpha</name>
        <sequence type="external"/>
    </isoform>
    <text>A number of isoforms, alpha-type and beta-type are produced by alternative promoter usage. Beta-type isoforms differ from alpha-type isoforms in their N-terminus.</text>
</comment>
<comment type="developmental stage">
    <text evidence="4">After the very early developmental stages, the expression levels decrease and remain relatively constant until around 24 h, with the onset of an increase of expression that continues till the larval stages.</text>
</comment>
<comment type="similarity">
    <text evidence="5">Belongs to the neurexin family.</text>
</comment>
<keyword id="KW-0877">Alternative promoter usage</keyword>
<keyword id="KW-0025">Alternative splicing</keyword>
<keyword id="KW-0130">Cell adhesion</keyword>
<keyword id="KW-0472">Membrane</keyword>
<keyword id="KW-1185">Reference proteome</keyword>
<keyword id="KW-0732">Signal</keyword>
<keyword id="KW-0812">Transmembrane</keyword>
<keyword id="KW-1133">Transmembrane helix</keyword>
<sequence>MLRLWPGGAPGGLASILLRISLRLALWLPPLTLGSALAEGPGELYVPQHMPHHLVPAARSHAPLRAGHAGTTYIFGRDGGLIVYTWPPNDRPSTRADRLAVGFSTQQKDAVLVRVDSSSGLGDYLQLQIERGNIKVVFNVGTDDINIEETSKFVNDGKYHIVRFTRSGGNATLQVDDLPVIERYPSGNIDNERLAIARQRIPYRLGRVVDDWLLDKGRQLTIFNSQTTIKIGGWEKGSRPFQGQLSGLYYNGLKVLNMAAEGDPNVRVEGSARLVGDMPSSSITPQSSVSAAGNRSETSPSITDITTTTASNRQGKQTTTPQDDLLVASAECPSDDEDIDPCDPSSGGLAHPPLPEAKGYPSPEVIRESSSTTGMVVGIVAAAALCILILLYAMYKYRNRDEGSYHVDESRNYISNSATQPNGAAVKEKPIGVPKNKKDKKNKDKEYYV</sequence>